<sequence length="252" mass="27917">MAFFRRLILMIQFLTRIPIKYESDITTEDFGKALALVPIVGLIIGGIMGVTYMLLVKVFFYKISAVLVLIEYIFLTGGIHLDGLGDTFDGVFSNRPKERILEIMRDSRVGTNAVLAVISVIILNYVILTEIDPAYMVKVIILFPVAGRLGSIVSASLSTYARRGEGMGKSFIDYCTLKELAIGIILYAVIFLSVGLSRGYIIMIFPILTAVILIKYFTRKIGGATGDILGAVCELNQTFYLMTVYAVLYFRG</sequence>
<comment type="function">
    <text evidence="1">Joins adenosylcobinamide-GDP and alpha-ribazole to generate adenosylcobalamin (Ado-cobalamin). Also synthesizes adenosylcobalamin 5'-phosphate from adenosylcobinamide-GDP and alpha-ribazole 5'-phosphate.</text>
</comment>
<comment type="catalytic activity">
    <reaction evidence="1">
        <text>alpha-ribazole + adenosylcob(III)inamide-GDP = adenosylcob(III)alamin + GMP + H(+)</text>
        <dbReference type="Rhea" id="RHEA:16049"/>
        <dbReference type="ChEBI" id="CHEBI:10329"/>
        <dbReference type="ChEBI" id="CHEBI:15378"/>
        <dbReference type="ChEBI" id="CHEBI:18408"/>
        <dbReference type="ChEBI" id="CHEBI:58115"/>
        <dbReference type="ChEBI" id="CHEBI:60487"/>
        <dbReference type="EC" id="2.7.8.26"/>
    </reaction>
</comment>
<comment type="catalytic activity">
    <reaction evidence="1">
        <text>alpha-ribazole 5'-phosphate + adenosylcob(III)inamide-GDP = adenosylcob(III)alamin 5'-phosphate + GMP + H(+)</text>
        <dbReference type="Rhea" id="RHEA:23560"/>
        <dbReference type="ChEBI" id="CHEBI:15378"/>
        <dbReference type="ChEBI" id="CHEBI:57918"/>
        <dbReference type="ChEBI" id="CHEBI:58115"/>
        <dbReference type="ChEBI" id="CHEBI:60487"/>
        <dbReference type="ChEBI" id="CHEBI:60493"/>
        <dbReference type="EC" id="2.7.8.26"/>
    </reaction>
</comment>
<comment type="cofactor">
    <cofactor evidence="1">
        <name>Mg(2+)</name>
        <dbReference type="ChEBI" id="CHEBI:18420"/>
    </cofactor>
</comment>
<comment type="pathway">
    <text evidence="1">Cofactor biosynthesis; adenosylcobalamin biosynthesis; adenosylcobalamin from cob(II)yrinate a,c-diamide: step 7/7.</text>
</comment>
<comment type="subcellular location">
    <subcellularLocation>
        <location evidence="1">Cell membrane</location>
        <topology evidence="1">Multi-pass membrane protein</topology>
    </subcellularLocation>
</comment>
<comment type="similarity">
    <text evidence="1">Belongs to the CobS family.</text>
</comment>
<organism>
    <name type="scientific">Clostridium acetobutylicum (strain ATCC 824 / DSM 792 / JCM 1419 / IAM 19013 / LMG 5710 / NBRC 13948 / NRRL B-527 / VKM B-1787 / 2291 / W)</name>
    <dbReference type="NCBI Taxonomy" id="272562"/>
    <lineage>
        <taxon>Bacteria</taxon>
        <taxon>Bacillati</taxon>
        <taxon>Bacillota</taxon>
        <taxon>Clostridia</taxon>
        <taxon>Eubacteriales</taxon>
        <taxon>Clostridiaceae</taxon>
        <taxon>Clostridium</taxon>
    </lineage>
</organism>
<name>COBS_CLOAB</name>
<dbReference type="EC" id="2.7.8.26" evidence="1"/>
<dbReference type="EMBL" id="AE001437">
    <property type="protein sequence ID" value="AAK79352.1"/>
    <property type="molecule type" value="Genomic_DNA"/>
</dbReference>
<dbReference type="PIR" id="E97070">
    <property type="entry name" value="E97070"/>
</dbReference>
<dbReference type="RefSeq" id="NP_348012.1">
    <property type="nucleotide sequence ID" value="NC_003030.1"/>
</dbReference>
<dbReference type="RefSeq" id="WP_010964693.1">
    <property type="nucleotide sequence ID" value="NC_003030.1"/>
</dbReference>
<dbReference type="STRING" id="272562.CA_C1384"/>
<dbReference type="GeneID" id="44997889"/>
<dbReference type="KEGG" id="cac:CA_C1384"/>
<dbReference type="PATRIC" id="fig|272562.8.peg.1589"/>
<dbReference type="eggNOG" id="COG0368">
    <property type="taxonomic scope" value="Bacteria"/>
</dbReference>
<dbReference type="HOGENOM" id="CLU_057426_1_2_9"/>
<dbReference type="OrthoDB" id="9794626at2"/>
<dbReference type="UniPathway" id="UPA00148">
    <property type="reaction ID" value="UER00238"/>
</dbReference>
<dbReference type="Proteomes" id="UP000000814">
    <property type="component" value="Chromosome"/>
</dbReference>
<dbReference type="GO" id="GO:0005886">
    <property type="term" value="C:plasma membrane"/>
    <property type="evidence" value="ECO:0007669"/>
    <property type="project" value="UniProtKB-SubCell"/>
</dbReference>
<dbReference type="GO" id="GO:0051073">
    <property type="term" value="F:adenosylcobinamide-GDP ribazoletransferase activity"/>
    <property type="evidence" value="ECO:0007669"/>
    <property type="project" value="UniProtKB-UniRule"/>
</dbReference>
<dbReference type="GO" id="GO:0008818">
    <property type="term" value="F:cobalamin 5'-phosphate synthase activity"/>
    <property type="evidence" value="ECO:0007669"/>
    <property type="project" value="UniProtKB-UniRule"/>
</dbReference>
<dbReference type="GO" id="GO:0009236">
    <property type="term" value="P:cobalamin biosynthetic process"/>
    <property type="evidence" value="ECO:0007669"/>
    <property type="project" value="UniProtKB-UniRule"/>
</dbReference>
<dbReference type="HAMAP" id="MF_00719">
    <property type="entry name" value="CobS"/>
    <property type="match status" value="1"/>
</dbReference>
<dbReference type="InterPro" id="IPR003805">
    <property type="entry name" value="CobS"/>
</dbReference>
<dbReference type="NCBIfam" id="TIGR00317">
    <property type="entry name" value="cobS"/>
    <property type="match status" value="1"/>
</dbReference>
<dbReference type="PANTHER" id="PTHR34148">
    <property type="entry name" value="ADENOSYLCOBINAMIDE-GDP RIBAZOLETRANSFERASE"/>
    <property type="match status" value="1"/>
</dbReference>
<dbReference type="PANTHER" id="PTHR34148:SF1">
    <property type="entry name" value="ADENOSYLCOBINAMIDE-GDP RIBAZOLETRANSFERASE"/>
    <property type="match status" value="1"/>
</dbReference>
<dbReference type="Pfam" id="PF02654">
    <property type="entry name" value="CobS"/>
    <property type="match status" value="1"/>
</dbReference>
<gene>
    <name evidence="1" type="primary">cobS</name>
    <name type="ordered locus">CA_C1384</name>
</gene>
<proteinExistence type="inferred from homology"/>
<evidence type="ECO:0000255" key="1">
    <source>
        <dbReference type="HAMAP-Rule" id="MF_00719"/>
    </source>
</evidence>
<reference key="1">
    <citation type="journal article" date="2001" name="J. Bacteriol.">
        <title>Genome sequence and comparative analysis of the solvent-producing bacterium Clostridium acetobutylicum.</title>
        <authorList>
            <person name="Noelling J."/>
            <person name="Breton G."/>
            <person name="Omelchenko M.V."/>
            <person name="Makarova K.S."/>
            <person name="Zeng Q."/>
            <person name="Gibson R."/>
            <person name="Lee H.M."/>
            <person name="Dubois J."/>
            <person name="Qiu D."/>
            <person name="Hitti J."/>
            <person name="Wolf Y.I."/>
            <person name="Tatusov R.L."/>
            <person name="Sabathe F."/>
            <person name="Doucette-Stamm L.A."/>
            <person name="Soucaille P."/>
            <person name="Daly M.J."/>
            <person name="Bennett G.N."/>
            <person name="Koonin E.V."/>
            <person name="Smith D.R."/>
        </authorList>
    </citation>
    <scope>NUCLEOTIDE SEQUENCE [LARGE SCALE GENOMIC DNA]</scope>
    <source>
        <strain>ATCC 824 / DSM 792 / JCM 1419 / IAM 19013 / LMG 5710 / NBRC 13948 / NRRL B-527 / VKM B-1787 / 2291 / W</strain>
    </source>
</reference>
<feature type="chain" id="PRO_0000146870" description="Adenosylcobinamide-GDP ribazoletransferase">
    <location>
        <begin position="1"/>
        <end position="252"/>
    </location>
</feature>
<feature type="transmembrane region" description="Helical" evidence="1">
    <location>
        <begin position="36"/>
        <end position="56"/>
    </location>
</feature>
<feature type="transmembrane region" description="Helical" evidence="1">
    <location>
        <begin position="59"/>
        <end position="79"/>
    </location>
</feature>
<feature type="transmembrane region" description="Helical" evidence="1">
    <location>
        <begin position="109"/>
        <end position="129"/>
    </location>
</feature>
<feature type="transmembrane region" description="Helical" evidence="1">
    <location>
        <begin position="133"/>
        <end position="153"/>
    </location>
</feature>
<feature type="transmembrane region" description="Helical" evidence="1">
    <location>
        <begin position="170"/>
        <end position="192"/>
    </location>
</feature>
<feature type="transmembrane region" description="Helical" evidence="1">
    <location>
        <begin position="199"/>
        <end position="218"/>
    </location>
</feature>
<feature type="transmembrane region" description="Helical" evidence="1">
    <location>
        <begin position="228"/>
        <end position="248"/>
    </location>
</feature>
<protein>
    <recommendedName>
        <fullName evidence="1">Adenosylcobinamide-GDP ribazoletransferase</fullName>
        <ecNumber evidence="1">2.7.8.26</ecNumber>
    </recommendedName>
    <alternativeName>
        <fullName evidence="1">Cobalamin synthase</fullName>
    </alternativeName>
    <alternativeName>
        <fullName evidence="1">Cobalamin-5'-phosphate synthase</fullName>
    </alternativeName>
</protein>
<accession>Q97JA2</accession>
<keyword id="KW-1003">Cell membrane</keyword>
<keyword id="KW-0169">Cobalamin biosynthesis</keyword>
<keyword id="KW-0460">Magnesium</keyword>
<keyword id="KW-0472">Membrane</keyword>
<keyword id="KW-1185">Reference proteome</keyword>
<keyword id="KW-0808">Transferase</keyword>
<keyword id="KW-0812">Transmembrane</keyword>
<keyword id="KW-1133">Transmembrane helix</keyword>